<evidence type="ECO:0000255" key="1">
    <source>
        <dbReference type="HAMAP-Rule" id="MF_00254"/>
    </source>
</evidence>
<sequence length="302" mass="34445">MQKFDTKTFQGLILALQDFWARQGCAIVQPLDMEVGAGTFHPQTFLRSIGPEPMNSAYVQPCRRPTDGRYGENPNRLQQYYQFQVVLKPSPKNIQDLYLKSLEEIGIDTSIHDIRFVEDNWESPTLGAWGLGWEIWLNGMEVTQFTYFQQVGGLECSPVTGEITYGLERIAMYVQGVESIYDLVWTDGPMGKLTYGDIFHQNEVEQSSYNFEHADVDALFNQFNQCEKDSQKLIEAGLALPAYEQVMKASHAFNLLDARHAISVTERQRYILRVRALSKAVAEAYYGKREALGFPLCKNLVK</sequence>
<name>SYGA_PSYIN</name>
<gene>
    <name evidence="1" type="primary">glyQ</name>
    <name type="ordered locus">Ping_3727</name>
</gene>
<protein>
    <recommendedName>
        <fullName evidence="1">Glycine--tRNA ligase alpha subunit</fullName>
        <ecNumber evidence="1">6.1.1.14</ecNumber>
    </recommendedName>
    <alternativeName>
        <fullName evidence="1">Glycyl-tRNA synthetase alpha subunit</fullName>
        <shortName evidence="1">GlyRS</shortName>
    </alternativeName>
</protein>
<proteinExistence type="inferred from homology"/>
<accession>A1T0Y6</accession>
<reference key="1">
    <citation type="journal article" date="2008" name="BMC Genomics">
        <title>Genomics of an extreme psychrophile, Psychromonas ingrahamii.</title>
        <authorList>
            <person name="Riley M."/>
            <person name="Staley J.T."/>
            <person name="Danchin A."/>
            <person name="Wang T.Z."/>
            <person name="Brettin T.S."/>
            <person name="Hauser L.J."/>
            <person name="Land M.L."/>
            <person name="Thompson L.S."/>
        </authorList>
    </citation>
    <scope>NUCLEOTIDE SEQUENCE [LARGE SCALE GENOMIC DNA]</scope>
    <source>
        <strain>DSM 17664 / CCUG 51855 / 37</strain>
    </source>
</reference>
<dbReference type="EC" id="6.1.1.14" evidence="1"/>
<dbReference type="EMBL" id="CP000510">
    <property type="protein sequence ID" value="ABM05401.1"/>
    <property type="molecule type" value="Genomic_DNA"/>
</dbReference>
<dbReference type="RefSeq" id="WP_011771949.1">
    <property type="nucleotide sequence ID" value="NC_008709.1"/>
</dbReference>
<dbReference type="SMR" id="A1T0Y6"/>
<dbReference type="STRING" id="357804.Ping_3727"/>
<dbReference type="KEGG" id="pin:Ping_3727"/>
<dbReference type="eggNOG" id="COG0752">
    <property type="taxonomic scope" value="Bacteria"/>
</dbReference>
<dbReference type="HOGENOM" id="CLU_057066_1_0_6"/>
<dbReference type="OrthoDB" id="9802183at2"/>
<dbReference type="Proteomes" id="UP000000639">
    <property type="component" value="Chromosome"/>
</dbReference>
<dbReference type="GO" id="GO:0005829">
    <property type="term" value="C:cytosol"/>
    <property type="evidence" value="ECO:0007669"/>
    <property type="project" value="TreeGrafter"/>
</dbReference>
<dbReference type="GO" id="GO:0005524">
    <property type="term" value="F:ATP binding"/>
    <property type="evidence" value="ECO:0007669"/>
    <property type="project" value="UniProtKB-UniRule"/>
</dbReference>
<dbReference type="GO" id="GO:0004820">
    <property type="term" value="F:glycine-tRNA ligase activity"/>
    <property type="evidence" value="ECO:0007669"/>
    <property type="project" value="UniProtKB-UniRule"/>
</dbReference>
<dbReference type="GO" id="GO:0006426">
    <property type="term" value="P:glycyl-tRNA aminoacylation"/>
    <property type="evidence" value="ECO:0007669"/>
    <property type="project" value="UniProtKB-UniRule"/>
</dbReference>
<dbReference type="CDD" id="cd00733">
    <property type="entry name" value="GlyRS_alpha_core"/>
    <property type="match status" value="1"/>
</dbReference>
<dbReference type="FunFam" id="3.30.930.10:FF:000006">
    <property type="entry name" value="Glycine--tRNA ligase alpha subunit"/>
    <property type="match status" value="1"/>
</dbReference>
<dbReference type="Gene3D" id="3.30.930.10">
    <property type="entry name" value="Bira Bifunctional Protein, Domain 2"/>
    <property type="match status" value="1"/>
</dbReference>
<dbReference type="Gene3D" id="1.20.58.180">
    <property type="entry name" value="Class II aaRS and biotin synthetases, domain 2"/>
    <property type="match status" value="1"/>
</dbReference>
<dbReference type="HAMAP" id="MF_00254">
    <property type="entry name" value="Gly_tRNA_synth_alpha"/>
    <property type="match status" value="1"/>
</dbReference>
<dbReference type="InterPro" id="IPR045864">
    <property type="entry name" value="aa-tRNA-synth_II/BPL/LPL"/>
</dbReference>
<dbReference type="InterPro" id="IPR006194">
    <property type="entry name" value="Gly-tRNA-synth_heterodimer"/>
</dbReference>
<dbReference type="InterPro" id="IPR002310">
    <property type="entry name" value="Gly-tRNA_ligase_asu"/>
</dbReference>
<dbReference type="NCBIfam" id="TIGR00388">
    <property type="entry name" value="glyQ"/>
    <property type="match status" value="1"/>
</dbReference>
<dbReference type="NCBIfam" id="NF006827">
    <property type="entry name" value="PRK09348.1"/>
    <property type="match status" value="1"/>
</dbReference>
<dbReference type="PANTHER" id="PTHR30075:SF2">
    <property type="entry name" value="GLYCINE--TRNA LIGASE, CHLOROPLASTIC_MITOCHONDRIAL 2"/>
    <property type="match status" value="1"/>
</dbReference>
<dbReference type="PANTHER" id="PTHR30075">
    <property type="entry name" value="GLYCYL-TRNA SYNTHETASE"/>
    <property type="match status" value="1"/>
</dbReference>
<dbReference type="Pfam" id="PF02091">
    <property type="entry name" value="tRNA-synt_2e"/>
    <property type="match status" value="1"/>
</dbReference>
<dbReference type="PRINTS" id="PR01044">
    <property type="entry name" value="TRNASYNTHGA"/>
</dbReference>
<dbReference type="SUPFAM" id="SSF55681">
    <property type="entry name" value="Class II aaRS and biotin synthetases"/>
    <property type="match status" value="1"/>
</dbReference>
<dbReference type="PROSITE" id="PS50861">
    <property type="entry name" value="AA_TRNA_LIGASE_II_GLYAB"/>
    <property type="match status" value="1"/>
</dbReference>
<comment type="catalytic activity">
    <reaction evidence="1">
        <text>tRNA(Gly) + glycine + ATP = glycyl-tRNA(Gly) + AMP + diphosphate</text>
        <dbReference type="Rhea" id="RHEA:16013"/>
        <dbReference type="Rhea" id="RHEA-COMP:9664"/>
        <dbReference type="Rhea" id="RHEA-COMP:9683"/>
        <dbReference type="ChEBI" id="CHEBI:30616"/>
        <dbReference type="ChEBI" id="CHEBI:33019"/>
        <dbReference type="ChEBI" id="CHEBI:57305"/>
        <dbReference type="ChEBI" id="CHEBI:78442"/>
        <dbReference type="ChEBI" id="CHEBI:78522"/>
        <dbReference type="ChEBI" id="CHEBI:456215"/>
        <dbReference type="EC" id="6.1.1.14"/>
    </reaction>
</comment>
<comment type="subunit">
    <text evidence="1">Tetramer of two alpha and two beta subunits.</text>
</comment>
<comment type="subcellular location">
    <subcellularLocation>
        <location evidence="1">Cytoplasm</location>
    </subcellularLocation>
</comment>
<comment type="similarity">
    <text evidence="1">Belongs to the class-II aminoacyl-tRNA synthetase family.</text>
</comment>
<feature type="chain" id="PRO_1000047475" description="Glycine--tRNA ligase alpha subunit">
    <location>
        <begin position="1"/>
        <end position="302"/>
    </location>
</feature>
<organism>
    <name type="scientific">Psychromonas ingrahamii (strain DSM 17664 / CCUG 51855 / 37)</name>
    <dbReference type="NCBI Taxonomy" id="357804"/>
    <lineage>
        <taxon>Bacteria</taxon>
        <taxon>Pseudomonadati</taxon>
        <taxon>Pseudomonadota</taxon>
        <taxon>Gammaproteobacteria</taxon>
        <taxon>Alteromonadales</taxon>
        <taxon>Psychromonadaceae</taxon>
        <taxon>Psychromonas</taxon>
    </lineage>
</organism>
<keyword id="KW-0030">Aminoacyl-tRNA synthetase</keyword>
<keyword id="KW-0067">ATP-binding</keyword>
<keyword id="KW-0963">Cytoplasm</keyword>
<keyword id="KW-0436">Ligase</keyword>
<keyword id="KW-0547">Nucleotide-binding</keyword>
<keyword id="KW-0648">Protein biosynthesis</keyword>
<keyword id="KW-1185">Reference proteome</keyword>